<keyword id="KW-0067">ATP-binding</keyword>
<keyword id="KW-0173">Coenzyme A biosynthesis</keyword>
<keyword id="KW-0963">Cytoplasm</keyword>
<keyword id="KW-0418">Kinase</keyword>
<keyword id="KW-0547">Nucleotide-binding</keyword>
<keyword id="KW-0808">Transferase</keyword>
<organism>
    <name type="scientific">Staphylococcus aureus (strain bovine RF122 / ET3-1)</name>
    <dbReference type="NCBI Taxonomy" id="273036"/>
    <lineage>
        <taxon>Bacteria</taxon>
        <taxon>Bacillati</taxon>
        <taxon>Bacillota</taxon>
        <taxon>Bacilli</taxon>
        <taxon>Bacillales</taxon>
        <taxon>Staphylococcaceae</taxon>
        <taxon>Staphylococcus</taxon>
    </lineage>
</organism>
<accession>Q2YTA2</accession>
<sequence length="207" mass="23636">MPKVIGLTGGIASGKSTVSELLSVFGFKVVDADKAAREAVKKGSKGLAQVREVFGDEAIDENGEMNRRYMGDLVFNHPEKRLELNAIIHPIVRDIMEEEKQEYLKQGYNVIMDIPLLFENELENTVDEVWVIYTSESIQMDRLMQRNNLSLEDAKARVYSQISIDKKSRMADHVIDNLGDKLELKQNLERLLKEEGYIEKPNYGEED</sequence>
<reference key="1">
    <citation type="journal article" date="2007" name="PLoS ONE">
        <title>Molecular correlates of host specialization in Staphylococcus aureus.</title>
        <authorList>
            <person name="Herron-Olson L."/>
            <person name="Fitzgerald J.R."/>
            <person name="Musser J.M."/>
            <person name="Kapur V."/>
        </authorList>
    </citation>
    <scope>NUCLEOTIDE SEQUENCE [LARGE SCALE GENOMIC DNA]</scope>
    <source>
        <strain>bovine RF122 / ET3-1</strain>
    </source>
</reference>
<proteinExistence type="inferred from homology"/>
<dbReference type="EC" id="2.7.1.24" evidence="1"/>
<dbReference type="EMBL" id="AJ938182">
    <property type="protein sequence ID" value="CAI81236.1"/>
    <property type="molecule type" value="Genomic_DNA"/>
</dbReference>
<dbReference type="RefSeq" id="WP_001127162.1">
    <property type="nucleotide sequence ID" value="NC_007622.1"/>
</dbReference>
<dbReference type="SMR" id="Q2YTA2"/>
<dbReference type="KEGG" id="sab:SAB1547c"/>
<dbReference type="HOGENOM" id="CLU_057180_0_0_9"/>
<dbReference type="UniPathway" id="UPA00241">
    <property type="reaction ID" value="UER00356"/>
</dbReference>
<dbReference type="GO" id="GO:0005737">
    <property type="term" value="C:cytoplasm"/>
    <property type="evidence" value="ECO:0007669"/>
    <property type="project" value="UniProtKB-SubCell"/>
</dbReference>
<dbReference type="GO" id="GO:0005524">
    <property type="term" value="F:ATP binding"/>
    <property type="evidence" value="ECO:0007669"/>
    <property type="project" value="UniProtKB-UniRule"/>
</dbReference>
<dbReference type="GO" id="GO:0004140">
    <property type="term" value="F:dephospho-CoA kinase activity"/>
    <property type="evidence" value="ECO:0007669"/>
    <property type="project" value="UniProtKB-UniRule"/>
</dbReference>
<dbReference type="GO" id="GO:0015937">
    <property type="term" value="P:coenzyme A biosynthetic process"/>
    <property type="evidence" value="ECO:0007669"/>
    <property type="project" value="UniProtKB-UniRule"/>
</dbReference>
<dbReference type="CDD" id="cd02022">
    <property type="entry name" value="DPCK"/>
    <property type="match status" value="1"/>
</dbReference>
<dbReference type="FunFam" id="3.40.50.300:FF:000991">
    <property type="entry name" value="Dephospho-CoA kinase"/>
    <property type="match status" value="1"/>
</dbReference>
<dbReference type="Gene3D" id="3.40.50.300">
    <property type="entry name" value="P-loop containing nucleotide triphosphate hydrolases"/>
    <property type="match status" value="1"/>
</dbReference>
<dbReference type="HAMAP" id="MF_00376">
    <property type="entry name" value="Dephospho_CoA_kinase"/>
    <property type="match status" value="1"/>
</dbReference>
<dbReference type="InterPro" id="IPR001977">
    <property type="entry name" value="Depp_CoAkinase"/>
</dbReference>
<dbReference type="InterPro" id="IPR027417">
    <property type="entry name" value="P-loop_NTPase"/>
</dbReference>
<dbReference type="NCBIfam" id="TIGR00152">
    <property type="entry name" value="dephospho-CoA kinase"/>
    <property type="match status" value="1"/>
</dbReference>
<dbReference type="PANTHER" id="PTHR10695:SF46">
    <property type="entry name" value="BIFUNCTIONAL COENZYME A SYNTHASE-RELATED"/>
    <property type="match status" value="1"/>
</dbReference>
<dbReference type="PANTHER" id="PTHR10695">
    <property type="entry name" value="DEPHOSPHO-COA KINASE-RELATED"/>
    <property type="match status" value="1"/>
</dbReference>
<dbReference type="Pfam" id="PF01121">
    <property type="entry name" value="CoaE"/>
    <property type="match status" value="1"/>
</dbReference>
<dbReference type="SUPFAM" id="SSF52540">
    <property type="entry name" value="P-loop containing nucleoside triphosphate hydrolases"/>
    <property type="match status" value="1"/>
</dbReference>
<dbReference type="PROSITE" id="PS51219">
    <property type="entry name" value="DPCK"/>
    <property type="match status" value="1"/>
</dbReference>
<protein>
    <recommendedName>
        <fullName evidence="1">Dephospho-CoA kinase</fullName>
        <ecNumber evidence="1">2.7.1.24</ecNumber>
    </recommendedName>
    <alternativeName>
        <fullName evidence="1">Dephosphocoenzyme A kinase</fullName>
    </alternativeName>
</protein>
<name>COAE_STAAB</name>
<evidence type="ECO:0000255" key="1">
    <source>
        <dbReference type="HAMAP-Rule" id="MF_00376"/>
    </source>
</evidence>
<comment type="function">
    <text evidence="1">Catalyzes the phosphorylation of the 3'-hydroxyl group of dephosphocoenzyme A to form coenzyme A.</text>
</comment>
<comment type="catalytic activity">
    <reaction evidence="1">
        <text>3'-dephospho-CoA + ATP = ADP + CoA + H(+)</text>
        <dbReference type="Rhea" id="RHEA:18245"/>
        <dbReference type="ChEBI" id="CHEBI:15378"/>
        <dbReference type="ChEBI" id="CHEBI:30616"/>
        <dbReference type="ChEBI" id="CHEBI:57287"/>
        <dbReference type="ChEBI" id="CHEBI:57328"/>
        <dbReference type="ChEBI" id="CHEBI:456216"/>
        <dbReference type="EC" id="2.7.1.24"/>
    </reaction>
</comment>
<comment type="pathway">
    <text evidence="1">Cofactor biosynthesis; coenzyme A biosynthesis; CoA from (R)-pantothenate: step 5/5.</text>
</comment>
<comment type="subcellular location">
    <subcellularLocation>
        <location evidence="1">Cytoplasm</location>
    </subcellularLocation>
</comment>
<comment type="similarity">
    <text evidence="1">Belongs to the CoaE family.</text>
</comment>
<feature type="chain" id="PRO_0000243344" description="Dephospho-CoA kinase">
    <location>
        <begin position="1"/>
        <end position="207"/>
    </location>
</feature>
<feature type="domain" description="DPCK" evidence="1">
    <location>
        <begin position="4"/>
        <end position="203"/>
    </location>
</feature>
<feature type="binding site" evidence="1">
    <location>
        <begin position="12"/>
        <end position="17"/>
    </location>
    <ligand>
        <name>ATP</name>
        <dbReference type="ChEBI" id="CHEBI:30616"/>
    </ligand>
</feature>
<gene>
    <name evidence="1" type="primary">coaE</name>
    <name type="ordered locus">SAB1547c</name>
</gene>